<evidence type="ECO:0000255" key="1"/>
<evidence type="ECO:0000303" key="2">
    <source ref="3"/>
</evidence>
<evidence type="ECO:0000303" key="3">
    <source ref="4"/>
</evidence>
<evidence type="ECO:0000305" key="4"/>
<organism>
    <name type="scientific">Arabidopsis thaliana</name>
    <name type="common">Mouse-ear cress</name>
    <dbReference type="NCBI Taxonomy" id="3702"/>
    <lineage>
        <taxon>Eukaryota</taxon>
        <taxon>Viridiplantae</taxon>
        <taxon>Streptophyta</taxon>
        <taxon>Embryophyta</taxon>
        <taxon>Tracheophyta</taxon>
        <taxon>Spermatophyta</taxon>
        <taxon>Magnoliopsida</taxon>
        <taxon>eudicotyledons</taxon>
        <taxon>Gunneridae</taxon>
        <taxon>Pentapetalae</taxon>
        <taxon>rosids</taxon>
        <taxon>malvids</taxon>
        <taxon>Brassicales</taxon>
        <taxon>Brassicaceae</taxon>
        <taxon>Camelineae</taxon>
        <taxon>Arabidopsis</taxon>
    </lineage>
</organism>
<gene>
    <name type="ordered locus">At4g18975</name>
    <name type="ORF">F13C5.140</name>
</gene>
<dbReference type="EMBL" id="AL021711">
    <property type="protein sequence ID" value="CAA16754.1"/>
    <property type="status" value="ALT_SEQ"/>
    <property type="molecule type" value="Genomic_DNA"/>
</dbReference>
<dbReference type="EMBL" id="AL161549">
    <property type="protein sequence ID" value="CAB78899.1"/>
    <property type="status" value="ALT_SEQ"/>
    <property type="molecule type" value="Genomic_DNA"/>
</dbReference>
<dbReference type="EMBL" id="CP002687">
    <property type="protein sequence ID" value="AEE84115.1"/>
    <property type="molecule type" value="Genomic_DNA"/>
</dbReference>
<dbReference type="EMBL" id="CP002687">
    <property type="protein sequence ID" value="AEE84116.1"/>
    <property type="molecule type" value="Genomic_DNA"/>
</dbReference>
<dbReference type="EMBL" id="CP002687">
    <property type="protein sequence ID" value="AEE84117.1"/>
    <property type="molecule type" value="Genomic_DNA"/>
</dbReference>
<dbReference type="EMBL" id="CP002687">
    <property type="protein sequence ID" value="AEE84118.1"/>
    <property type="molecule type" value="Genomic_DNA"/>
</dbReference>
<dbReference type="EMBL" id="BT012648">
    <property type="protein sequence ID" value="AAT06467.1"/>
    <property type="molecule type" value="mRNA"/>
</dbReference>
<dbReference type="EMBL" id="AK221620">
    <property type="protein sequence ID" value="BAD95227.1"/>
    <property type="molecule type" value="mRNA"/>
</dbReference>
<dbReference type="PIR" id="T05034">
    <property type="entry name" value="T05034"/>
</dbReference>
<dbReference type="RefSeq" id="NP_001031667.1">
    <molecule id="Q2V3H0-2"/>
    <property type="nucleotide sequence ID" value="NM_001036590.1"/>
</dbReference>
<dbReference type="RefSeq" id="NP_001119009.1">
    <molecule id="Q2V3H0-1"/>
    <property type="nucleotide sequence ID" value="NM_001125537.2"/>
</dbReference>
<dbReference type="RefSeq" id="NP_001190768.1">
    <molecule id="Q2V3H0-1"/>
    <property type="nucleotide sequence ID" value="NM_001203839.2"/>
</dbReference>
<dbReference type="RefSeq" id="NP_567571.1">
    <molecule id="Q2V3H0-1"/>
    <property type="nucleotide sequence ID" value="NM_118015.2"/>
</dbReference>
<dbReference type="SMR" id="Q2V3H0"/>
<dbReference type="FunCoup" id="Q2V3H0">
    <property type="interactions" value="1174"/>
</dbReference>
<dbReference type="STRING" id="3702.Q2V3H0"/>
<dbReference type="PaxDb" id="3702-AT4G18975.4"/>
<dbReference type="EnsemblPlants" id="AT4G18975.1">
    <molecule id="Q2V3H0-1"/>
    <property type="protein sequence ID" value="AT4G18975.1"/>
    <property type="gene ID" value="AT4G18975"/>
</dbReference>
<dbReference type="EnsemblPlants" id="AT4G18975.2">
    <molecule id="Q2V3H0-2"/>
    <property type="protein sequence ID" value="AT4G18975.2"/>
    <property type="gene ID" value="AT4G18975"/>
</dbReference>
<dbReference type="EnsemblPlants" id="AT4G18975.3">
    <molecule id="Q2V3H0-1"/>
    <property type="protein sequence ID" value="AT4G18975.3"/>
    <property type="gene ID" value="AT4G18975"/>
</dbReference>
<dbReference type="EnsemblPlants" id="AT4G18975.4">
    <molecule id="Q2V3H0-1"/>
    <property type="protein sequence ID" value="AT4G18975.4"/>
    <property type="gene ID" value="AT4G18975"/>
</dbReference>
<dbReference type="GeneID" id="827633"/>
<dbReference type="Gramene" id="AT4G18975.1">
    <molecule id="Q2V3H0-1"/>
    <property type="protein sequence ID" value="AT4G18975.1"/>
    <property type="gene ID" value="AT4G18975"/>
</dbReference>
<dbReference type="Gramene" id="AT4G18975.2">
    <molecule id="Q2V3H0-2"/>
    <property type="protein sequence ID" value="AT4G18975.2"/>
    <property type="gene ID" value="AT4G18975"/>
</dbReference>
<dbReference type="Gramene" id="AT4G18975.3">
    <molecule id="Q2V3H0-1"/>
    <property type="protein sequence ID" value="AT4G18975.3"/>
    <property type="gene ID" value="AT4G18975"/>
</dbReference>
<dbReference type="Gramene" id="AT4G18975.4">
    <molecule id="Q2V3H0-1"/>
    <property type="protein sequence ID" value="AT4G18975.4"/>
    <property type="gene ID" value="AT4G18975"/>
</dbReference>
<dbReference type="KEGG" id="ath:AT4G18975"/>
<dbReference type="Araport" id="AT4G18975"/>
<dbReference type="TAIR" id="AT4G18975"/>
<dbReference type="eggNOG" id="ENOG502QQWM">
    <property type="taxonomic scope" value="Eukaryota"/>
</dbReference>
<dbReference type="HOGENOM" id="CLU_049554_1_1_1"/>
<dbReference type="InParanoid" id="Q2V3H0"/>
<dbReference type="OMA" id="ILMYDIH"/>
<dbReference type="PhylomeDB" id="Q2V3H0"/>
<dbReference type="PRO" id="PR:Q2V3H0"/>
<dbReference type="Proteomes" id="UP000006548">
    <property type="component" value="Chromosome 4"/>
</dbReference>
<dbReference type="ExpressionAtlas" id="Q2V3H0">
    <property type="expression patterns" value="baseline and differential"/>
</dbReference>
<dbReference type="GO" id="GO:0009507">
    <property type="term" value="C:chloroplast"/>
    <property type="evidence" value="ECO:0007669"/>
    <property type="project" value="UniProtKB-SubCell"/>
</dbReference>
<dbReference type="Gene3D" id="1.25.40.10">
    <property type="entry name" value="Tetratricopeptide repeat domain"/>
    <property type="match status" value="1"/>
</dbReference>
<dbReference type="InterPro" id="IPR044646">
    <property type="entry name" value="EMB1417-like"/>
</dbReference>
<dbReference type="InterPro" id="IPR002885">
    <property type="entry name" value="Pentatricopeptide_rpt"/>
</dbReference>
<dbReference type="InterPro" id="IPR011990">
    <property type="entry name" value="TPR-like_helical_dom_sf"/>
</dbReference>
<dbReference type="NCBIfam" id="TIGR00756">
    <property type="entry name" value="PPR"/>
    <property type="match status" value="1"/>
</dbReference>
<dbReference type="PANTHER" id="PTHR46782">
    <property type="entry name" value="OS01G0757700 PROTEIN"/>
    <property type="match status" value="1"/>
</dbReference>
<dbReference type="PANTHER" id="PTHR46782:SF2">
    <property type="entry name" value="OS07G0545900 PROTEIN"/>
    <property type="match status" value="1"/>
</dbReference>
<sequence>MALCNLNPTQGIFPLQGLSKSQEFICFSLLQSPRCGSYSSLKTKRFGFCIRSKFSEKEAGKLDRGYVATVNSKEIKKVGKKEHHLWKKNDSAGSGQKALNLVRMLSGLPNEKEAVYGALNKWVAWEVEFPIIAAAKALQILRKRSQWHRVIQLAKWMLSKGQGATMGTYDILLLAFDMDERADEAESLWNMILHTHTRSIPRRLFARMIALYAHHDLHDKVIEVFADMEELKVSPDEDSARRVARAFRELNQEENRKLILRRYLSEYKYIYFNGERVRVKRYFSEDS</sequence>
<feature type="transit peptide" description="Chloroplast" evidence="1">
    <location>
        <begin position="1"/>
        <end position="34"/>
    </location>
</feature>
<feature type="chain" id="PRO_0000363439" description="Pentatricopeptide repeat-containing protein At4g18975, chloroplastic">
    <location>
        <begin position="35"/>
        <end position="287"/>
    </location>
</feature>
<feature type="repeat" description="PPR 1">
    <location>
        <begin position="165"/>
        <end position="199"/>
    </location>
</feature>
<feature type="repeat" description="PPR 2">
    <location>
        <begin position="201"/>
        <end position="235"/>
    </location>
</feature>
<feature type="splice variant" id="VSP_036302" description="In isoform 2." evidence="4">
    <original>MALCNLNPTQGIFPLQGLSKSQEFICFSLLQSPRCGSYSSLKTKRFGFCIRSKFS</original>
    <variation>MLFFASISTLRKLLLVEDEKVWLLHQIK</variation>
    <location>
        <begin position="1"/>
        <end position="55"/>
    </location>
</feature>
<feature type="splice variant" id="VSP_036303" description="In isoform 3." evidence="2 3">
    <location>
        <begin position="153"/>
        <end position="287"/>
    </location>
</feature>
<keyword id="KW-0025">Alternative splicing</keyword>
<keyword id="KW-0150">Chloroplast</keyword>
<keyword id="KW-0934">Plastid</keyword>
<keyword id="KW-1185">Reference proteome</keyword>
<keyword id="KW-0677">Repeat</keyword>
<keyword id="KW-0809">Transit peptide</keyword>
<accession>Q2V3H0</accession>
<accession>O49410</accession>
<accession>Q6NKP6</accession>
<protein>
    <recommendedName>
        <fullName>Pentatricopeptide repeat-containing protein At4g18975, chloroplastic</fullName>
    </recommendedName>
</protein>
<comment type="subcellular location">
    <subcellularLocation>
        <location evidence="4">Plastid</location>
        <location evidence="4">Chloroplast</location>
    </subcellularLocation>
</comment>
<comment type="alternative products">
    <event type="alternative splicing"/>
    <isoform>
        <id>Q2V3H0-1</id>
        <name>1</name>
        <sequence type="displayed"/>
    </isoform>
    <isoform>
        <id>Q2V3H0-2</id>
        <name>2</name>
        <sequence type="described" ref="VSP_036302"/>
    </isoform>
    <isoform>
        <id>Q2V3H0-3</id>
        <name>3</name>
        <sequence type="described" ref="VSP_036303"/>
    </isoform>
</comment>
<comment type="miscellaneous">
    <molecule>Isoform 2</molecule>
    <text evidence="4">May be due to a competing acceptor splice site.</text>
</comment>
<comment type="miscellaneous">
    <molecule>Isoform 3</molecule>
    <text evidence="4">May be due to a competing acceptor splice site.</text>
</comment>
<comment type="similarity">
    <text evidence="4">Belongs to the PPR family. P subfamily.</text>
</comment>
<comment type="sequence caution" evidence="4">
    <conflict type="erroneous gene model prediction">
        <sequence resource="EMBL-CDS" id="CAA16754"/>
    </conflict>
    <text>The predicted gene has been split into 2 genes: At4g18970 and At4g18975.</text>
</comment>
<comment type="sequence caution" evidence="4">
    <conflict type="erroneous gene model prediction">
        <sequence resource="EMBL-CDS" id="CAB78899"/>
    </conflict>
    <text>The predicted gene has been split into 2 genes: At4g18970 and At4g18975.</text>
</comment>
<comment type="online information" name="Pentatricopeptide repeat proteins">
    <link uri="https://ppr.plantenergy.uwa.edu.au"/>
</comment>
<reference key="1">
    <citation type="journal article" date="1999" name="Nature">
        <title>Sequence and analysis of chromosome 4 of the plant Arabidopsis thaliana.</title>
        <authorList>
            <person name="Mayer K.F.X."/>
            <person name="Schueller C."/>
            <person name="Wambutt R."/>
            <person name="Murphy G."/>
            <person name="Volckaert G."/>
            <person name="Pohl T."/>
            <person name="Duesterhoeft A."/>
            <person name="Stiekema W."/>
            <person name="Entian K.-D."/>
            <person name="Terryn N."/>
            <person name="Harris B."/>
            <person name="Ansorge W."/>
            <person name="Brandt P."/>
            <person name="Grivell L.A."/>
            <person name="Rieger M."/>
            <person name="Weichselgartner M."/>
            <person name="de Simone V."/>
            <person name="Obermaier B."/>
            <person name="Mache R."/>
            <person name="Mueller M."/>
            <person name="Kreis M."/>
            <person name="Delseny M."/>
            <person name="Puigdomenech P."/>
            <person name="Watson M."/>
            <person name="Schmidtheini T."/>
            <person name="Reichert B."/>
            <person name="Portetelle D."/>
            <person name="Perez-Alonso M."/>
            <person name="Boutry M."/>
            <person name="Bancroft I."/>
            <person name="Vos P."/>
            <person name="Hoheisel J."/>
            <person name="Zimmermann W."/>
            <person name="Wedler H."/>
            <person name="Ridley P."/>
            <person name="Langham S.-A."/>
            <person name="McCullagh B."/>
            <person name="Bilham L."/>
            <person name="Robben J."/>
            <person name="van der Schueren J."/>
            <person name="Grymonprez B."/>
            <person name="Chuang Y.-J."/>
            <person name="Vandenbussche F."/>
            <person name="Braeken M."/>
            <person name="Weltjens I."/>
            <person name="Voet M."/>
            <person name="Bastiaens I."/>
            <person name="Aert R."/>
            <person name="Defoor E."/>
            <person name="Weitzenegger T."/>
            <person name="Bothe G."/>
            <person name="Ramsperger U."/>
            <person name="Hilbert H."/>
            <person name="Braun M."/>
            <person name="Holzer E."/>
            <person name="Brandt A."/>
            <person name="Peters S."/>
            <person name="van Staveren M."/>
            <person name="Dirkse W."/>
            <person name="Mooijman P."/>
            <person name="Klein Lankhorst R."/>
            <person name="Rose M."/>
            <person name="Hauf J."/>
            <person name="Koetter P."/>
            <person name="Berneiser S."/>
            <person name="Hempel S."/>
            <person name="Feldpausch M."/>
            <person name="Lamberth S."/>
            <person name="Van den Daele H."/>
            <person name="De Keyser A."/>
            <person name="Buysshaert C."/>
            <person name="Gielen J."/>
            <person name="Villarroel R."/>
            <person name="De Clercq R."/>
            <person name="van Montagu M."/>
            <person name="Rogers J."/>
            <person name="Cronin A."/>
            <person name="Quail M.A."/>
            <person name="Bray-Allen S."/>
            <person name="Clark L."/>
            <person name="Doggett J."/>
            <person name="Hall S."/>
            <person name="Kay M."/>
            <person name="Lennard N."/>
            <person name="McLay K."/>
            <person name="Mayes R."/>
            <person name="Pettett A."/>
            <person name="Rajandream M.A."/>
            <person name="Lyne M."/>
            <person name="Benes V."/>
            <person name="Rechmann S."/>
            <person name="Borkova D."/>
            <person name="Bloecker H."/>
            <person name="Scharfe M."/>
            <person name="Grimm M."/>
            <person name="Loehnert T.-H."/>
            <person name="Dose S."/>
            <person name="de Haan M."/>
            <person name="Maarse A.C."/>
            <person name="Schaefer M."/>
            <person name="Mueller-Auer S."/>
            <person name="Gabel C."/>
            <person name="Fuchs M."/>
            <person name="Fartmann B."/>
            <person name="Granderath K."/>
            <person name="Dauner D."/>
            <person name="Herzl A."/>
            <person name="Neumann S."/>
            <person name="Argiriou A."/>
            <person name="Vitale D."/>
            <person name="Liguori R."/>
            <person name="Piravandi E."/>
            <person name="Massenet O."/>
            <person name="Quigley F."/>
            <person name="Clabauld G."/>
            <person name="Muendlein A."/>
            <person name="Felber R."/>
            <person name="Schnabl S."/>
            <person name="Hiller R."/>
            <person name="Schmidt W."/>
            <person name="Lecharny A."/>
            <person name="Aubourg S."/>
            <person name="Chefdor F."/>
            <person name="Cooke R."/>
            <person name="Berger C."/>
            <person name="Monfort A."/>
            <person name="Casacuberta E."/>
            <person name="Gibbons T."/>
            <person name="Weber N."/>
            <person name="Vandenbol M."/>
            <person name="Bargues M."/>
            <person name="Terol J."/>
            <person name="Torres A."/>
            <person name="Perez-Perez A."/>
            <person name="Purnelle B."/>
            <person name="Bent E."/>
            <person name="Johnson S."/>
            <person name="Tacon D."/>
            <person name="Jesse T."/>
            <person name="Heijnen L."/>
            <person name="Schwarz S."/>
            <person name="Scholler P."/>
            <person name="Heber S."/>
            <person name="Francs P."/>
            <person name="Bielke C."/>
            <person name="Frishman D."/>
            <person name="Haase D."/>
            <person name="Lemcke K."/>
            <person name="Mewes H.-W."/>
            <person name="Stocker S."/>
            <person name="Zaccaria P."/>
            <person name="Bevan M."/>
            <person name="Wilson R.K."/>
            <person name="de la Bastide M."/>
            <person name="Habermann K."/>
            <person name="Parnell L."/>
            <person name="Dedhia N."/>
            <person name="Gnoj L."/>
            <person name="Schutz K."/>
            <person name="Huang E."/>
            <person name="Spiegel L."/>
            <person name="Sekhon M."/>
            <person name="Murray J."/>
            <person name="Sheet P."/>
            <person name="Cordes M."/>
            <person name="Abu-Threideh J."/>
            <person name="Stoneking T."/>
            <person name="Kalicki J."/>
            <person name="Graves T."/>
            <person name="Harmon G."/>
            <person name="Edwards J."/>
            <person name="Latreille P."/>
            <person name="Courtney L."/>
            <person name="Cloud J."/>
            <person name="Abbott A."/>
            <person name="Scott K."/>
            <person name="Johnson D."/>
            <person name="Minx P."/>
            <person name="Bentley D."/>
            <person name="Fulton B."/>
            <person name="Miller N."/>
            <person name="Greco T."/>
            <person name="Kemp K."/>
            <person name="Kramer J."/>
            <person name="Fulton L."/>
            <person name="Mardis E."/>
            <person name="Dante M."/>
            <person name="Pepin K."/>
            <person name="Hillier L.W."/>
            <person name="Nelson J."/>
            <person name="Spieth J."/>
            <person name="Ryan E."/>
            <person name="Andrews S."/>
            <person name="Geisel C."/>
            <person name="Layman D."/>
            <person name="Du H."/>
            <person name="Ali J."/>
            <person name="Berghoff A."/>
            <person name="Jones K."/>
            <person name="Drone K."/>
            <person name="Cotton M."/>
            <person name="Joshu C."/>
            <person name="Antonoiu B."/>
            <person name="Zidanic M."/>
            <person name="Strong C."/>
            <person name="Sun H."/>
            <person name="Lamar B."/>
            <person name="Yordan C."/>
            <person name="Ma P."/>
            <person name="Zhong J."/>
            <person name="Preston R."/>
            <person name="Vil D."/>
            <person name="Shekher M."/>
            <person name="Matero A."/>
            <person name="Shah R."/>
            <person name="Swaby I.K."/>
            <person name="O'Shaughnessy A."/>
            <person name="Rodriguez M."/>
            <person name="Hoffman J."/>
            <person name="Till S."/>
            <person name="Granat S."/>
            <person name="Shohdy N."/>
            <person name="Hasegawa A."/>
            <person name="Hameed A."/>
            <person name="Lodhi M."/>
            <person name="Johnson A."/>
            <person name="Chen E."/>
            <person name="Marra M.A."/>
            <person name="Martienssen R."/>
            <person name="McCombie W.R."/>
        </authorList>
    </citation>
    <scope>NUCLEOTIDE SEQUENCE [LARGE SCALE GENOMIC DNA]</scope>
    <source>
        <strain>cv. Columbia</strain>
    </source>
</reference>
<reference key="2">
    <citation type="journal article" date="2017" name="Plant J.">
        <title>Araport11: a complete reannotation of the Arabidopsis thaliana reference genome.</title>
        <authorList>
            <person name="Cheng C.Y."/>
            <person name="Krishnakumar V."/>
            <person name="Chan A.P."/>
            <person name="Thibaud-Nissen F."/>
            <person name="Schobel S."/>
            <person name="Town C.D."/>
        </authorList>
    </citation>
    <scope>GENOME REANNOTATION</scope>
    <source>
        <strain>cv. Columbia</strain>
    </source>
</reference>
<reference key="3">
    <citation type="submission" date="2004-05" db="EMBL/GenBank/DDBJ databases">
        <title>Arabidopsis ORF clones.</title>
        <authorList>
            <person name="Shinn P."/>
            <person name="Chen H."/>
            <person name="Cheuk R.F."/>
            <person name="Kim C.J."/>
            <person name="Carninci P."/>
            <person name="Hayashizaki Y."/>
            <person name="Ishida J."/>
            <person name="Kamiya A."/>
            <person name="Kawai J."/>
            <person name="Narusaka M."/>
            <person name="Sakurai T."/>
            <person name="Satou M."/>
            <person name="Seki M."/>
            <person name="Shinozaki K."/>
            <person name="Ecker J.R."/>
        </authorList>
    </citation>
    <scope>NUCLEOTIDE SEQUENCE [LARGE SCALE MRNA] (ISOFORM 3)</scope>
    <source>
        <strain>cv. Columbia</strain>
    </source>
</reference>
<reference key="4">
    <citation type="submission" date="2005-03" db="EMBL/GenBank/DDBJ databases">
        <title>Large-scale analysis of RIKEN Arabidopsis full-length (RAFL) cDNAs.</title>
        <authorList>
            <person name="Totoki Y."/>
            <person name="Seki M."/>
            <person name="Ishida J."/>
            <person name="Nakajima M."/>
            <person name="Enju A."/>
            <person name="Kamiya A."/>
            <person name="Narusaka M."/>
            <person name="Shin-i T."/>
            <person name="Nakagawa M."/>
            <person name="Sakamoto N."/>
            <person name="Oishi K."/>
            <person name="Kohara Y."/>
            <person name="Kobayashi M."/>
            <person name="Toyoda A."/>
            <person name="Sakaki Y."/>
            <person name="Sakurai T."/>
            <person name="Iida K."/>
            <person name="Akiyama K."/>
            <person name="Satou M."/>
            <person name="Toyoda T."/>
            <person name="Konagaya A."/>
            <person name="Carninci P."/>
            <person name="Kawai J."/>
            <person name="Hayashizaki Y."/>
            <person name="Shinozaki K."/>
        </authorList>
    </citation>
    <scope>NUCLEOTIDE SEQUENCE [LARGE SCALE MRNA] (ISOFORM 3)</scope>
    <source>
        <strain>cv. Columbia</strain>
    </source>
</reference>
<reference key="5">
    <citation type="journal article" date="2004" name="Plant Cell">
        <title>Genome-wide analysis of Arabidopsis pentatricopeptide repeat proteins reveals their essential role in organelle biogenesis.</title>
        <authorList>
            <person name="Lurin C."/>
            <person name="Andres C."/>
            <person name="Aubourg S."/>
            <person name="Bellaoui M."/>
            <person name="Bitton F."/>
            <person name="Bruyere C."/>
            <person name="Caboche M."/>
            <person name="Debast C."/>
            <person name="Gualberto J."/>
            <person name="Hoffmann B."/>
            <person name="Lecharny A."/>
            <person name="Le Ret M."/>
            <person name="Martin-Magniette M.-L."/>
            <person name="Mireau H."/>
            <person name="Peeters N."/>
            <person name="Renou J.-P."/>
            <person name="Szurek B."/>
            <person name="Taconnat L."/>
            <person name="Small I."/>
        </authorList>
    </citation>
    <scope>GENE FAMILY</scope>
</reference>
<proteinExistence type="evidence at transcript level"/>
<name>PP322_ARATH</name>